<organismHost>
    <name type="scientific">Homo sapiens</name>
    <name type="common">Human</name>
    <dbReference type="NCBI Taxonomy" id="9606"/>
</organismHost>
<proteinExistence type="inferred from homology"/>
<organism>
    <name type="scientific">Human adenovirus F serotype 40</name>
    <name type="common">HAdV-40</name>
    <name type="synonym">Human adenovirus 40</name>
    <dbReference type="NCBI Taxonomy" id="28284"/>
    <lineage>
        <taxon>Viruses</taxon>
        <taxon>Varidnaviria</taxon>
        <taxon>Bamfordvirae</taxon>
        <taxon>Preplasmiviricota</taxon>
        <taxon>Tectiliviricetes</taxon>
        <taxon>Rowavirales</taxon>
        <taxon>Adenoviridae</taxon>
        <taxon>Mastadenovirus</taxon>
        <taxon>Human mastadenovirus F</taxon>
    </lineage>
</organism>
<reference key="1">
    <citation type="journal article" date="1988" name="Virology">
        <title>The genes encoding the DNA binding protein and the 23K protease of adenovirus types 40 and 41.</title>
        <authorList>
            <person name="Vos H.L."/>
            <person name="der Lee F.M."/>
            <person name="Reemst A.M.C.B."/>
            <person name="van Loon A.E."/>
            <person name="Sussenbach J.S."/>
        </authorList>
    </citation>
    <scope>NUCLEOTIDE SEQUENCE [GENOMIC DNA]</scope>
</reference>
<protein>
    <recommendedName>
        <fullName evidence="1">DNA-binding protein</fullName>
        <shortName evidence="1">DBP</shortName>
    </recommendedName>
    <alternativeName>
        <fullName evidence="1">Early 2A protein</fullName>
    </alternativeName>
    <alternativeName>
        <fullName evidence="1">Early E2A DNA-binding protein</fullName>
    </alternativeName>
</protein>
<evidence type="ECO:0000255" key="1">
    <source>
        <dbReference type="HAMAP-Rule" id="MF_04054"/>
    </source>
</evidence>
<evidence type="ECO:0000256" key="2">
    <source>
        <dbReference type="SAM" id="MobiDB-lite"/>
    </source>
</evidence>
<sequence>MAGRQQELPTITPYLQETSPERAPSLPPKKKLRKNVQVPDRVPVLPPSPEVVPDSEEEEEEVVYTGFSHPGVQVVQKASGKRYVRRLEPKGVPPPSEENNEEEEPSTSKAVTSVVLNPQAEPLVSAWEKGMDLMIKLMEKYHVEAEEKNGFKFLPEQSNVYRKICQTWLNEEHRGLPLTFTSHKTFVEMMGRFLRAYVESYAGVKNNEWEPTGCAIWLHGCTEQEGVLRCYHGLEMIQKEQLVEMDVASENAQRALKEHPSRAKVVQNRWGRSVVQLKNDDARCCVEDVSCATNVFSAKSCGLFFSEGTKAQTAFLQIEAFMQAEYPKMQNGLKRLLMVMRCDCLYKPTGVPQLGRQMCKATPFALSNVDSLRAEEVTDKVALASIQYPCVLVYQCANPVYRNSRGGQGPNCDFKISAPDLLGALQLVRRLWGENVDGPLPKMLIPEFKWSSRLQYRNVALPASHGDGEKEPF</sequence>
<accession>P11806</accession>
<keyword id="KW-0235">DNA replication</keyword>
<keyword id="KW-0238">DNA-binding</keyword>
<keyword id="KW-0244">Early protein</keyword>
<keyword id="KW-1048">Host nucleus</keyword>
<keyword id="KW-0945">Host-virus interaction</keyword>
<keyword id="KW-0479">Metal-binding</keyword>
<keyword id="KW-0597">Phosphoprotein</keyword>
<keyword id="KW-1185">Reference proteome</keyword>
<keyword id="KW-1194">Viral DNA replication</keyword>
<keyword id="KW-0862">Zinc</keyword>
<dbReference type="EMBL" id="M19540">
    <property type="protein sequence ID" value="AAA52196.1"/>
    <property type="molecule type" value="Genomic_DNA"/>
</dbReference>
<dbReference type="EMBL" id="L19443">
    <property type="protein sequence ID" value="AAC13969.1"/>
    <property type="molecule type" value="Genomic_DNA"/>
</dbReference>
<dbReference type="PIR" id="A28645">
    <property type="entry name" value="ERAD40"/>
</dbReference>
<dbReference type="SMR" id="P11806"/>
<dbReference type="DNASU" id="2715921"/>
<dbReference type="KEGG" id="vg:2715921"/>
<dbReference type="Proteomes" id="UP000151954">
    <property type="component" value="Segment"/>
</dbReference>
<dbReference type="GO" id="GO:0042025">
    <property type="term" value="C:host cell nucleus"/>
    <property type="evidence" value="ECO:0000250"/>
    <property type="project" value="UniProtKB"/>
</dbReference>
<dbReference type="GO" id="GO:0019028">
    <property type="term" value="C:viral capsid"/>
    <property type="evidence" value="ECO:0000250"/>
    <property type="project" value="UniProtKB"/>
</dbReference>
<dbReference type="GO" id="GO:0003677">
    <property type="term" value="F:DNA binding"/>
    <property type="evidence" value="ECO:0000250"/>
    <property type="project" value="UniProtKB"/>
</dbReference>
<dbReference type="GO" id="GO:0008270">
    <property type="term" value="F:zinc ion binding"/>
    <property type="evidence" value="ECO:0007669"/>
    <property type="project" value="UniProtKB-UniRule"/>
</dbReference>
<dbReference type="GO" id="GO:0006260">
    <property type="term" value="P:DNA replication"/>
    <property type="evidence" value="ECO:0007669"/>
    <property type="project" value="UniProtKB-KW"/>
</dbReference>
<dbReference type="GO" id="GO:0006351">
    <property type="term" value="P:DNA-templated transcription"/>
    <property type="evidence" value="ECO:0007669"/>
    <property type="project" value="UniProtKB-UniRule"/>
</dbReference>
<dbReference type="GO" id="GO:0045740">
    <property type="term" value="P:positive regulation of DNA replication"/>
    <property type="evidence" value="ECO:0007669"/>
    <property type="project" value="UniProtKB-UniRule"/>
</dbReference>
<dbReference type="GO" id="GO:0039693">
    <property type="term" value="P:viral DNA genome replication"/>
    <property type="evidence" value="ECO:0000250"/>
    <property type="project" value="UniProtKB"/>
</dbReference>
<dbReference type="GO" id="GO:0039687">
    <property type="term" value="P:viral DNA strand displacement replication"/>
    <property type="evidence" value="ECO:0000250"/>
    <property type="project" value="UniProtKB"/>
</dbReference>
<dbReference type="FunFam" id="1.10.269.10:FF:000001">
    <property type="entry name" value="DNA-binding protein"/>
    <property type="match status" value="1"/>
</dbReference>
<dbReference type="Gene3D" id="3.90.148.10">
    <property type="entry name" value="Adenovirus DNA-binding, C-terminal domain superfamily/Adenovirus DNA-binding, zinc binding domain"/>
    <property type="match status" value="2"/>
</dbReference>
<dbReference type="Gene3D" id="1.10.269.10">
    <property type="entry name" value="Adenovirus DNA-binding, N-terminal domain"/>
    <property type="match status" value="1"/>
</dbReference>
<dbReference type="HAMAP" id="MF_04054">
    <property type="entry name" value="ADV_DNB2"/>
    <property type="match status" value="1"/>
</dbReference>
<dbReference type="InterPro" id="IPR036367">
    <property type="entry name" value="Ad_DBP_C_sf"/>
</dbReference>
<dbReference type="InterPro" id="IPR036368">
    <property type="entry name" value="ADBP_zn-bd_sf"/>
</dbReference>
<dbReference type="InterPro" id="IPR003176">
    <property type="entry name" value="Adenovirus_DNA-bd_a"/>
</dbReference>
<dbReference type="InterPro" id="IPR036362">
    <property type="entry name" value="Adenovirus_DNA-bd_N_sf"/>
</dbReference>
<dbReference type="InterPro" id="IPR005376">
    <property type="entry name" value="Adenovirus_DNA-bd_zn-bd"/>
</dbReference>
<dbReference type="InterPro" id="IPR037540">
    <property type="entry name" value="ADV_DNB2"/>
</dbReference>
<dbReference type="Pfam" id="PF02236">
    <property type="entry name" value="Viral_DNA_bi"/>
    <property type="match status" value="1"/>
</dbReference>
<dbReference type="Pfam" id="PF03728">
    <property type="entry name" value="Viral_DNA_Zn_bi"/>
    <property type="match status" value="2"/>
</dbReference>
<dbReference type="SUPFAM" id="SSF47724">
    <property type="entry name" value="Domain of early E2A DNA-binding protein, ADDBP"/>
    <property type="match status" value="1"/>
</dbReference>
<dbReference type="SUPFAM" id="SSF57917">
    <property type="entry name" value="Zn-binding domains of ADDBP"/>
    <property type="match status" value="2"/>
</dbReference>
<feature type="chain" id="PRO_0000221682" description="DNA-binding protein">
    <location>
        <begin position="1"/>
        <end position="473"/>
    </location>
</feature>
<feature type="region of interest" description="Disordered" evidence="2">
    <location>
        <begin position="1"/>
        <end position="69"/>
    </location>
</feature>
<feature type="region of interest" description="Disordered" evidence="2">
    <location>
        <begin position="85"/>
        <end position="111"/>
    </location>
</feature>
<feature type="region of interest" description="Flexible loop" evidence="1">
    <location>
        <begin position="243"/>
        <end position="277"/>
    </location>
</feature>
<feature type="region of interest" description="C-terminal arm, DBP binding" evidence="1">
    <location>
        <begin position="459"/>
        <end position="473"/>
    </location>
</feature>
<feature type="compositionally biased region" description="Polar residues" evidence="2">
    <location>
        <begin position="7"/>
        <end position="18"/>
    </location>
</feature>
<feature type="compositionally biased region" description="Acidic residues" evidence="2">
    <location>
        <begin position="53"/>
        <end position="62"/>
    </location>
</feature>
<feature type="binding site" evidence="1">
    <location>
        <position position="230"/>
    </location>
    <ligand>
        <name>Zn(2+)</name>
        <dbReference type="ChEBI" id="CHEBI:29105"/>
        <label>1</label>
    </ligand>
</feature>
<feature type="binding site" evidence="1">
    <location>
        <position position="232"/>
    </location>
    <ligand>
        <name>Zn(2+)</name>
        <dbReference type="ChEBI" id="CHEBI:29105"/>
        <label>1</label>
    </ligand>
</feature>
<feature type="binding site" evidence="1">
    <location>
        <position position="285"/>
    </location>
    <ligand>
        <name>Zn(2+)</name>
        <dbReference type="ChEBI" id="CHEBI:29105"/>
        <label>1</label>
    </ligand>
</feature>
<feature type="binding site" evidence="1">
    <location>
        <position position="301"/>
    </location>
    <ligand>
        <name>Zn(2+)</name>
        <dbReference type="ChEBI" id="CHEBI:29105"/>
        <label>1</label>
    </ligand>
</feature>
<feature type="binding site" evidence="1">
    <location>
        <position position="342"/>
    </location>
    <ligand>
        <name>Zn(2+)</name>
        <dbReference type="ChEBI" id="CHEBI:29105"/>
        <label>2</label>
    </ligand>
</feature>
<feature type="binding site" evidence="1">
    <location>
        <position position="344"/>
    </location>
    <ligand>
        <name>Zn(2+)</name>
        <dbReference type="ChEBI" id="CHEBI:29105"/>
        <label>2</label>
    </ligand>
</feature>
<feature type="binding site" evidence="1">
    <location>
        <position position="396"/>
    </location>
    <ligand>
        <name>Zn(2+)</name>
        <dbReference type="ChEBI" id="CHEBI:29105"/>
        <label>2</label>
    </ligand>
</feature>
<feature type="binding site" evidence="1">
    <location>
        <position position="412"/>
    </location>
    <ligand>
        <name>Zn(2+)</name>
        <dbReference type="ChEBI" id="CHEBI:29105"/>
        <label>2</label>
    </ligand>
</feature>
<feature type="modified residue" description="Phosphotyrosine; by host" evidence="1">
    <location>
        <position position="141"/>
    </location>
</feature>
<comment type="function">
    <text evidence="1">Plays a role in the elongation phase of viral strand displacement replication by unwinding the template in an ATP-independent fashion, employing its capacity to form multimers. Also enhances the rate of initiation. Released from template upon second strand synthesis. Assembles in complex with viral pTP, viral pol, host NFIA and host POU2F1/OCT1 on viral origin of replication. Covers the whole ssDNA genome during synthesis. The complementary strand synthesis induces its relese from DNA template. May inhibit cellular transcription mediated by the interaction between host SRCAP and CBP.</text>
</comment>
<comment type="subunit">
    <text evidence="1">Homomultimerizes on viral ssDNA bound to pTP. Forms a initiation complex with viral polymerase, pTP and hosts NFIA and POU2F1/OCT1. Interacts with host SRCAP.</text>
</comment>
<comment type="subcellular location">
    <subcellularLocation>
        <location evidence="1">Host nucleus</location>
    </subcellularLocation>
    <text evidence="1">Accumulates in infected cells.</text>
</comment>
<comment type="domain">
    <text evidence="1">The C-terminal arm bridges DBP molecules together, thereby creating a chain.</text>
</comment>
<comment type="similarity">
    <text evidence="1">Belongs to the adenoviridae E2A DNA-binding protein family.</text>
</comment>
<gene>
    <name evidence="1" type="primary">DBP</name>
</gene>
<name>DNB2_ADE40</name>